<gene>
    <name type="primary">adcA</name>
    <name type="ordered locus">SPy_0714</name>
    <name type="ordered locus">M5005_Spy0543</name>
</gene>
<organism>
    <name type="scientific">Streptococcus pyogenes serotype M1</name>
    <dbReference type="NCBI Taxonomy" id="301447"/>
    <lineage>
        <taxon>Bacteria</taxon>
        <taxon>Bacillati</taxon>
        <taxon>Bacillota</taxon>
        <taxon>Bacilli</taxon>
        <taxon>Lactobacillales</taxon>
        <taxon>Streptococcaceae</taxon>
        <taxon>Streptococcus</taxon>
    </lineage>
</organism>
<accession>Q9A0L9</accession>
<accession>Q48ZQ7</accession>
<comment type="function">
    <text evidence="1">Part of the ATP-binding cassette (ABC) transport system AdcABC involved in zinc import (By similarity). Binds zinc with high affinity and specificity and delivers it to the membrane permease for translocation into the cytoplasm (By similarity).</text>
</comment>
<comment type="domain">
    <text evidence="1">The His-rich loop facilitates the closure of the zinc binding site and is required for zinc acquisition.</text>
</comment>
<comment type="similarity">
    <text evidence="4">Belongs to the bacterial solute-binding protein 9 family.</text>
</comment>
<sequence length="515" mass="58560">MKKKILLMMSLISVFFAWQLTQAKQVLAEGKVKVVTTFYPVYEFTKGVIGNDGDVFMLMKAGTEPHDFEPSTKDIKKIQDADAFVYMDDNMETWVSDVKKSLTSKKVTIVKGTGNMLLVAGAGHDHHHEDADKKHEHNKHSEEGHNHAFDPHVWLSPYRSITVVENIRDSLSKAYPEKAENFKANAATYIEKLKELDKDYTAALSDAKQKSFVTQHAAFGYMALDYGLNQISINGVTPDAEPSAKRIATLSKYVKKYGIKYIYFEENASSKVAKTLAKEAGVKAAVLSPLEGLTEKEMKAGQDYFTVMRKNLETLRLTTDVAGKEILPEKDTTKTVYNGYFKDKEVKDRQLSDWSGSWQSVYPYLQDGTLDQVWDYKAKKSKGKMTAAEYKDYYTTGYKTDVEQIKINGKKKTMTFVRNGEKKTFTYTYAGKEILTYPKGNRGVRFMFEAKEADAGEFKYVQFSDHAIAPEKAKHFHLYWGGDSQEKLHKELEHWPTYYGSDLSGREIAQEINAH</sequence>
<feature type="signal peptide" evidence="2">
    <location>
        <begin position="1"/>
        <end position="28"/>
    </location>
</feature>
<feature type="chain" id="PRO_0000031868" description="Zinc-binding protein AdcA">
    <location>
        <begin position="29"/>
        <end position="515"/>
    </location>
</feature>
<feature type="region of interest" description="Disordered" evidence="3">
    <location>
        <begin position="125"/>
        <end position="148"/>
    </location>
</feature>
<feature type="region of interest" description="His-rich loop" evidence="1">
    <location>
        <begin position="129"/>
        <end position="148"/>
    </location>
</feature>
<feature type="binding site" evidence="1">
    <location>
        <position position="66"/>
    </location>
    <ligand>
        <name>Zn(2+)</name>
        <dbReference type="ChEBI" id="CHEBI:29105"/>
    </ligand>
</feature>
<feature type="binding site" evidence="1">
    <location>
        <position position="152"/>
    </location>
    <ligand>
        <name>Zn(2+)</name>
        <dbReference type="ChEBI" id="CHEBI:29105"/>
    </ligand>
</feature>
<feature type="binding site" evidence="1">
    <location>
        <position position="216"/>
    </location>
    <ligand>
        <name>Zn(2+)</name>
        <dbReference type="ChEBI" id="CHEBI:29105"/>
    </ligand>
</feature>
<feature type="binding site" evidence="1">
    <location>
        <position position="291"/>
    </location>
    <ligand>
        <name>Zn(2+)</name>
        <dbReference type="ChEBI" id="CHEBI:29105"/>
    </ligand>
</feature>
<feature type="sequence conflict" description="In Ref. 3; AAZ51161." evidence="4" ref="3">
    <original>D</original>
    <variation>N</variation>
    <location>
        <position position="367"/>
    </location>
</feature>
<dbReference type="EMBL" id="AE004092">
    <property type="protein sequence ID" value="AAK33667.2"/>
    <property type="molecule type" value="Genomic_DNA"/>
</dbReference>
<dbReference type="EMBL" id="CP000017">
    <property type="protein sequence ID" value="AAZ51161.1"/>
    <property type="molecule type" value="Genomic_DNA"/>
</dbReference>
<dbReference type="RefSeq" id="NP_268946.2">
    <property type="nucleotide sequence ID" value="NC_002737.2"/>
</dbReference>
<dbReference type="SMR" id="Q9A0L9"/>
<dbReference type="PaxDb" id="1314-HKU360_00553"/>
<dbReference type="KEGG" id="spy:SPy_0714"/>
<dbReference type="KEGG" id="spz:M5005_Spy0543"/>
<dbReference type="PATRIC" id="fig|160490.10.peg.608"/>
<dbReference type="HOGENOM" id="CLU_016838_7_1_9"/>
<dbReference type="PHI-base" id="PHI:9798"/>
<dbReference type="Proteomes" id="UP000000750">
    <property type="component" value="Chromosome"/>
</dbReference>
<dbReference type="GO" id="GO:0008270">
    <property type="term" value="F:zinc ion binding"/>
    <property type="evidence" value="ECO:0007669"/>
    <property type="project" value="InterPro"/>
</dbReference>
<dbReference type="GO" id="GO:0007155">
    <property type="term" value="P:cell adhesion"/>
    <property type="evidence" value="ECO:0007669"/>
    <property type="project" value="InterPro"/>
</dbReference>
<dbReference type="GO" id="GO:0006829">
    <property type="term" value="P:zinc ion transport"/>
    <property type="evidence" value="ECO:0007669"/>
    <property type="project" value="UniProtKB-KW"/>
</dbReference>
<dbReference type="CDD" id="cd01017">
    <property type="entry name" value="AdcA"/>
    <property type="match status" value="1"/>
</dbReference>
<dbReference type="Gene3D" id="2.40.128.20">
    <property type="match status" value="1"/>
</dbReference>
<dbReference type="Gene3D" id="3.40.50.1980">
    <property type="entry name" value="Nitrogenase molybdenum iron protein domain"/>
    <property type="match status" value="2"/>
</dbReference>
<dbReference type="InterPro" id="IPR006129">
    <property type="entry name" value="AdhesinB"/>
</dbReference>
<dbReference type="InterPro" id="IPR050492">
    <property type="entry name" value="Bact_metal-bind_prot9"/>
</dbReference>
<dbReference type="InterPro" id="IPR012674">
    <property type="entry name" value="Calycin"/>
</dbReference>
<dbReference type="InterPro" id="IPR006128">
    <property type="entry name" value="Lipoprotein_PsaA-like"/>
</dbReference>
<dbReference type="InterPro" id="IPR015304">
    <property type="entry name" value="ZinT_dom"/>
</dbReference>
<dbReference type="InterPro" id="IPR006127">
    <property type="entry name" value="ZnuA-like"/>
</dbReference>
<dbReference type="PANTHER" id="PTHR42953:SF3">
    <property type="entry name" value="HIGH-AFFINITY ZINC UPTAKE SYSTEM PROTEIN ZNUA"/>
    <property type="match status" value="1"/>
</dbReference>
<dbReference type="PANTHER" id="PTHR42953">
    <property type="entry name" value="HIGH-AFFINITY ZINC UPTAKE SYSTEM PROTEIN ZNUA-RELATED"/>
    <property type="match status" value="1"/>
</dbReference>
<dbReference type="Pfam" id="PF09223">
    <property type="entry name" value="ZinT"/>
    <property type="match status" value="1"/>
</dbReference>
<dbReference type="Pfam" id="PF01297">
    <property type="entry name" value="ZnuA"/>
    <property type="match status" value="1"/>
</dbReference>
<dbReference type="PRINTS" id="PR00691">
    <property type="entry name" value="ADHESINB"/>
</dbReference>
<dbReference type="PRINTS" id="PR00690">
    <property type="entry name" value="ADHESNFAMILY"/>
</dbReference>
<dbReference type="SUPFAM" id="SSF53807">
    <property type="entry name" value="Helical backbone' metal receptor"/>
    <property type="match status" value="1"/>
</dbReference>
<dbReference type="SUPFAM" id="SSF50814">
    <property type="entry name" value="Lipocalins"/>
    <property type="match status" value="1"/>
</dbReference>
<evidence type="ECO:0000250" key="1">
    <source>
        <dbReference type="UniProtKB" id="Q8CWN2"/>
    </source>
</evidence>
<evidence type="ECO:0000255" key="2"/>
<evidence type="ECO:0000256" key="3">
    <source>
        <dbReference type="SAM" id="MobiDB-lite"/>
    </source>
</evidence>
<evidence type="ECO:0000305" key="4"/>
<protein>
    <recommendedName>
        <fullName>Zinc-binding protein AdcA</fullName>
    </recommendedName>
</protein>
<keyword id="KW-0406">Ion transport</keyword>
<keyword id="KW-0479">Metal-binding</keyword>
<keyword id="KW-1185">Reference proteome</keyword>
<keyword id="KW-0732">Signal</keyword>
<keyword id="KW-0813">Transport</keyword>
<keyword id="KW-0862">Zinc</keyword>
<keyword id="KW-0864">Zinc transport</keyword>
<proteinExistence type="inferred from homology"/>
<reference key="1">
    <citation type="journal article" date="2001" name="Proc. Natl. Acad. Sci. U.S.A.">
        <title>Complete genome sequence of an M1 strain of Streptococcus pyogenes.</title>
        <authorList>
            <person name="Ferretti J.J."/>
            <person name="McShan W.M."/>
            <person name="Ajdic D.J."/>
            <person name="Savic D.J."/>
            <person name="Savic G."/>
            <person name="Lyon K."/>
            <person name="Primeaux C."/>
            <person name="Sezate S."/>
            <person name="Suvorov A.N."/>
            <person name="Kenton S."/>
            <person name="Lai H.S."/>
            <person name="Lin S.P."/>
            <person name="Qian Y."/>
            <person name="Jia H.G."/>
            <person name="Najar F.Z."/>
            <person name="Ren Q."/>
            <person name="Zhu H."/>
            <person name="Song L."/>
            <person name="White J."/>
            <person name="Yuan X."/>
            <person name="Clifton S.W."/>
            <person name="Roe B.A."/>
            <person name="McLaughlin R.E."/>
        </authorList>
    </citation>
    <scope>NUCLEOTIDE SEQUENCE [LARGE SCALE GENOMIC DNA]</scope>
    <source>
        <strain>ATCC 700294 / SF370 / Serotype M1</strain>
    </source>
</reference>
<reference key="2">
    <citation type="submission" date="2014-04" db="EMBL/GenBank/DDBJ databases">
        <authorList>
            <person name="Beres S.B."/>
            <person name="Musser J.M."/>
        </authorList>
    </citation>
    <scope>SEQUENCE REVISION TO 127</scope>
</reference>
<reference key="3">
    <citation type="journal article" date="2005" name="J. Infect. Dis.">
        <title>Evolutionary origin and emergence of a highly successful clone of serotype M1 group A Streptococcus involved multiple horizontal gene transfer events.</title>
        <authorList>
            <person name="Sumby P."/>
            <person name="Porcella S.F."/>
            <person name="Madrigal A.G."/>
            <person name="Barbian K.D."/>
            <person name="Virtaneva K."/>
            <person name="Ricklefs S.M."/>
            <person name="Sturdevant D.E."/>
            <person name="Graham M.R."/>
            <person name="Vuopio-Varkila J."/>
            <person name="Hoe N.P."/>
            <person name="Musser J.M."/>
        </authorList>
    </citation>
    <scope>NUCLEOTIDE SEQUENCE [LARGE SCALE GENOMIC DNA]</scope>
    <source>
        <strain>ATCC BAA-947 / MGAS5005 / Serotype M1</strain>
    </source>
</reference>
<name>ADCA_STRP1</name>